<evidence type="ECO:0000250" key="1"/>
<evidence type="ECO:0000255" key="2">
    <source>
        <dbReference type="PROSITE-ProRule" id="PRU10023"/>
    </source>
</evidence>
<evidence type="ECO:0000269" key="3">
    <source>
    </source>
</evidence>
<evidence type="ECO:0000269" key="4">
    <source>
    </source>
</evidence>
<evidence type="ECO:0000305" key="5"/>
<name>PKS4_RUBID</name>
<feature type="chain" id="PRO_0000424289" description="Polyketide synthase 4">
    <location>
        <begin position="1"/>
        <end position="383"/>
    </location>
</feature>
<feature type="active site" description="Nucleophile and monoketide coumarate intermediate" evidence="2">
    <location>
        <position position="164"/>
    </location>
</feature>
<sequence>MVTVEEVRKAQRAEGPATVLAIGTATPPNCVGQSTYPDYYFRITNSEHKIELKQKFQRMCDKSMIKKRYMYLTEEILKENPSMCEYMAPSLDARQDMVIVEIPKLGKEAATKAIKEWGQPKSKITHLVFCTTSGVDMPGADYQLIKLFGLRPSVKRLMMYQQGCFAGGTVLRLAKDLAENNRGARVLVVCSEITVVTFRGPSDTHLDCLVGQALFGDGVASIIVGADPLPEIEKPLFELVSAAQTILPDSEGAIEGHLREVGLTFHLLENVPALISKNIEKSLNETFKPLDIMDWNSLFWIAHPGGPAILDQVEAKLGLKPEKLEATGHILSEYGNMSSACVLFILDVVRRKSAANGVTTRILSIGQISKSLLILAWFLFSLV</sequence>
<protein>
    <recommendedName>
        <fullName>Polyketide synthase 4</fullName>
        <shortName>RiPKS4</shortName>
        <ecNumber evidence="3 4">2.3.1.212</ecNumber>
        <ecNumber evidence="3 4">2.3.1.74</ecNumber>
    </recommendedName>
    <alternativeName>
        <fullName>Benzalacetone synthase PKS4</fullName>
        <shortName>RiBAS</shortName>
    </alternativeName>
    <alternativeName>
        <fullName>Naringenin-chalcone synthase PKS4</fullName>
    </alternativeName>
</protein>
<accession>B0LDU5</accession>
<dbReference type="EC" id="2.3.1.212" evidence="3 4"/>
<dbReference type="EC" id="2.3.1.74" evidence="3 4"/>
<dbReference type="EMBL" id="EF694717">
    <property type="protein sequence ID" value="ABV54602.1"/>
    <property type="molecule type" value="Genomic_DNA"/>
</dbReference>
<dbReference type="SMR" id="B0LDU5"/>
<dbReference type="KEGG" id="ag:ABV54602"/>
<dbReference type="BioCyc" id="MetaCyc:MONOMER-15853"/>
<dbReference type="BRENDA" id="2.3.1.212">
    <property type="organism ID" value="5472"/>
</dbReference>
<dbReference type="BRENDA" id="2.3.1.74">
    <property type="organism ID" value="5472"/>
</dbReference>
<dbReference type="UniPathway" id="UPA00154"/>
<dbReference type="GO" id="GO:0016210">
    <property type="term" value="F:naringenin-chalcone synthase activity"/>
    <property type="evidence" value="ECO:0007669"/>
    <property type="project" value="UniProtKB-EC"/>
</dbReference>
<dbReference type="GO" id="GO:0042803">
    <property type="term" value="F:protein homodimerization activity"/>
    <property type="evidence" value="ECO:0000250"/>
    <property type="project" value="UniProtKB"/>
</dbReference>
<dbReference type="GO" id="GO:0009813">
    <property type="term" value="P:flavonoid biosynthetic process"/>
    <property type="evidence" value="ECO:0007669"/>
    <property type="project" value="UniProtKB-UniPathway"/>
</dbReference>
<dbReference type="GO" id="GO:0030639">
    <property type="term" value="P:polyketide biosynthetic process"/>
    <property type="evidence" value="ECO:0007669"/>
    <property type="project" value="TreeGrafter"/>
</dbReference>
<dbReference type="CDD" id="cd00831">
    <property type="entry name" value="CHS_like"/>
    <property type="match status" value="1"/>
</dbReference>
<dbReference type="FunFam" id="3.40.47.10:FF:000014">
    <property type="entry name" value="Chalcone synthase 1"/>
    <property type="match status" value="1"/>
</dbReference>
<dbReference type="FunFam" id="3.40.47.10:FF:000025">
    <property type="entry name" value="Chalcone synthase 2"/>
    <property type="match status" value="1"/>
</dbReference>
<dbReference type="Gene3D" id="3.40.47.10">
    <property type="match status" value="2"/>
</dbReference>
<dbReference type="InterPro" id="IPR012328">
    <property type="entry name" value="Chalcone/stilbene_synt_C"/>
</dbReference>
<dbReference type="InterPro" id="IPR001099">
    <property type="entry name" value="Chalcone/stilbene_synt_N"/>
</dbReference>
<dbReference type="InterPro" id="IPR018088">
    <property type="entry name" value="Chalcone/stilbene_synthase_AS"/>
</dbReference>
<dbReference type="InterPro" id="IPR011141">
    <property type="entry name" value="Polyketide_synthase_type-III"/>
</dbReference>
<dbReference type="InterPro" id="IPR016039">
    <property type="entry name" value="Thiolase-like"/>
</dbReference>
<dbReference type="PANTHER" id="PTHR11877:SF80">
    <property type="entry name" value="CHALCONE SYNTHASE 1"/>
    <property type="match status" value="1"/>
</dbReference>
<dbReference type="PANTHER" id="PTHR11877">
    <property type="entry name" value="HYDROXYMETHYLGLUTARYL-COA SYNTHASE"/>
    <property type="match status" value="1"/>
</dbReference>
<dbReference type="Pfam" id="PF02797">
    <property type="entry name" value="Chal_sti_synt_C"/>
    <property type="match status" value="1"/>
</dbReference>
<dbReference type="Pfam" id="PF00195">
    <property type="entry name" value="Chal_sti_synt_N"/>
    <property type="match status" value="1"/>
</dbReference>
<dbReference type="PIRSF" id="PIRSF000451">
    <property type="entry name" value="PKS_III"/>
    <property type="match status" value="1"/>
</dbReference>
<dbReference type="SUPFAM" id="SSF53901">
    <property type="entry name" value="Thiolase-like"/>
    <property type="match status" value="2"/>
</dbReference>
<dbReference type="PROSITE" id="PS00441">
    <property type="entry name" value="CHALCONE_SYNTH"/>
    <property type="match status" value="1"/>
</dbReference>
<proteinExistence type="evidence at protein level"/>
<keyword id="KW-0012">Acyltransferase</keyword>
<keyword id="KW-0157">Chromophore</keyword>
<keyword id="KW-0379">Hydroxylation</keyword>
<keyword id="KW-0808">Transferase</keyword>
<organism>
    <name type="scientific">Rubus idaeus</name>
    <name type="common">Raspberry</name>
    <dbReference type="NCBI Taxonomy" id="32247"/>
    <lineage>
        <taxon>Eukaryota</taxon>
        <taxon>Viridiplantae</taxon>
        <taxon>Streptophyta</taxon>
        <taxon>Embryophyta</taxon>
        <taxon>Tracheophyta</taxon>
        <taxon>Spermatophyta</taxon>
        <taxon>Magnoliopsida</taxon>
        <taxon>eudicotyledons</taxon>
        <taxon>Gunneridae</taxon>
        <taxon>Pentapetalae</taxon>
        <taxon>rosids</taxon>
        <taxon>fabids</taxon>
        <taxon>Rosales</taxon>
        <taxon>Rosaceae</taxon>
        <taxon>Rosoideae</taxon>
        <taxon>Rosoideae incertae sedis</taxon>
        <taxon>Rubus</taxon>
    </lineage>
</organism>
<comment type="function">
    <text evidence="4">Bifunctional polyketide synthase producing both 4-hydroxybenzalacetone and naringenin chalcone. Can use p-coumaryl-CoA and ferulyl-CoA as substrates. Catalyzes the initial key reaction step in the biosynthesis of phenylbutanoids.</text>
</comment>
<comment type="catalytic activity">
    <reaction evidence="3 4">
        <text>4-coumaroyl-CoA + malonyl-CoA + H2O + H(+) = 4-hydroxybenzalacetone + 2 CO2 + 2 CoA</text>
        <dbReference type="Rhea" id="RHEA:34483"/>
        <dbReference type="ChEBI" id="CHEBI:15377"/>
        <dbReference type="ChEBI" id="CHEBI:15378"/>
        <dbReference type="ChEBI" id="CHEBI:16526"/>
        <dbReference type="ChEBI" id="CHEBI:57287"/>
        <dbReference type="ChEBI" id="CHEBI:57355"/>
        <dbReference type="ChEBI" id="CHEBI:57384"/>
        <dbReference type="ChEBI" id="CHEBI:68636"/>
        <dbReference type="EC" id="2.3.1.212"/>
    </reaction>
</comment>
<comment type="catalytic activity">
    <reaction evidence="2 3 4">
        <text>(E)-4-coumaroyl-CoA + 3 malonyl-CoA + 3 H(+) = 2',4,4',6'-tetrahydroxychalcone + 3 CO2 + 4 CoA</text>
        <dbReference type="Rhea" id="RHEA:11128"/>
        <dbReference type="ChEBI" id="CHEBI:15378"/>
        <dbReference type="ChEBI" id="CHEBI:15413"/>
        <dbReference type="ChEBI" id="CHEBI:16526"/>
        <dbReference type="ChEBI" id="CHEBI:57287"/>
        <dbReference type="ChEBI" id="CHEBI:57384"/>
        <dbReference type="ChEBI" id="CHEBI:85008"/>
        <dbReference type="EC" id="2.3.1.74"/>
    </reaction>
</comment>
<comment type="activity regulation">
    <text evidence="3">Inhibited by glutathione.</text>
</comment>
<comment type="biophysicochemical properties">
    <kinetics>
        <KM evidence="3">1 uM for malonyl-CoA</KM>
        <KM evidence="3">3 uM for p-coumaryl CoA</KM>
    </kinetics>
    <phDependence>
        <text evidence="3">Optimum pH is approximately 8.0.</text>
    </phDependence>
</comment>
<comment type="pathway">
    <text>Secondary metabolite biosynthesis; flavonoid biosynthesis.</text>
</comment>
<comment type="subunit">
    <text evidence="1">Homodimer.</text>
</comment>
<comment type="tissue specificity">
    <text evidence="4">Expressed in fruits.</text>
</comment>
<comment type="developmental stage">
    <text evidence="4">Progressively accumulates in fruits when berries are white and full size until complete ripening.</text>
</comment>
<comment type="induction">
    <text evidence="3">By sucrose (at protein level).</text>
</comment>
<comment type="similarity">
    <text evidence="5">Belongs to the thiolase-like superfamily. Chalcone/stilbene synthases family.</text>
</comment>
<reference key="1">
    <citation type="journal article" date="2008" name="Arch. Biochem. Biophys.">
        <title>Molecular and biochemical characterization of benzalacetone synthase and chalcone synthase genes and their proteins from raspberry (Rubus idaeus L.).</title>
        <authorList>
            <person name="Zheng D."/>
            <person name="Hrazdina G."/>
        </authorList>
    </citation>
    <scope>NUCLEOTIDE SEQUENCE [GENOMIC DNA]</scope>
    <scope>FUNCTION</scope>
    <scope>CATALYTIC ACTIVITY</scope>
    <scope>TISSUE SPECIFICITY</scope>
    <scope>DEVELOPMENTAL STAGE</scope>
    <source>
        <strain>cv. Royalty</strain>
        <tissue>Leaf</tissue>
    </source>
</reference>
<reference key="2">
    <citation type="journal article" date="1996" name="Plant Physiol.">
        <title>Aromatic polyketide synthases (purification, characterization, and antibody development to benzalacetone synthase from raspberry fruits).</title>
        <authorList>
            <person name="Borejsza-Wysocki W."/>
            <person name="Hrazdina G."/>
        </authorList>
    </citation>
    <scope>CATALYTIC ACTIVITY</scope>
    <scope>BIOPHYSICOCHEMICAL PROPERTIES</scope>
    <scope>ACTIVITY REGULATION</scope>
    <scope>INDUCTION BY SUCROSE</scope>
</reference>
<gene>
    <name type="primary">PKS4</name>
    <name type="synonym">BAS</name>
</gene>